<organism>
    <name type="scientific">Danio rerio</name>
    <name type="common">Zebrafish</name>
    <name type="synonym">Brachydanio rerio</name>
    <dbReference type="NCBI Taxonomy" id="7955"/>
    <lineage>
        <taxon>Eukaryota</taxon>
        <taxon>Metazoa</taxon>
        <taxon>Chordata</taxon>
        <taxon>Craniata</taxon>
        <taxon>Vertebrata</taxon>
        <taxon>Euteleostomi</taxon>
        <taxon>Actinopterygii</taxon>
        <taxon>Neopterygii</taxon>
        <taxon>Teleostei</taxon>
        <taxon>Ostariophysi</taxon>
        <taxon>Cypriniformes</taxon>
        <taxon>Danionidae</taxon>
        <taxon>Danioninae</taxon>
        <taxon>Danio</taxon>
    </lineage>
</organism>
<reference key="1">
    <citation type="journal article" date="2005" name="EMBO Rep.">
        <title>Fyn/Yes and non-canonical Wnt signalling converge on RhoA in vertebrate gastrulation cell movements.</title>
        <authorList>
            <person name="Jopling C."/>
            <person name="den Hertog J."/>
        </authorList>
    </citation>
    <scope>NUCLEOTIDE SEQUENCE [MRNA]</scope>
    <scope>FUNCTION</scope>
    <scope>TISSUE SPECIFICITY</scope>
</reference>
<reference key="2">
    <citation type="journal article" date="2013" name="Nature">
        <title>The zebrafish reference genome sequence and its relationship to the human genome.</title>
        <authorList>
            <person name="Howe K."/>
            <person name="Clark M.D."/>
            <person name="Torroja C.F."/>
            <person name="Torrance J."/>
            <person name="Berthelot C."/>
            <person name="Muffato M."/>
            <person name="Collins J.E."/>
            <person name="Humphray S."/>
            <person name="McLaren K."/>
            <person name="Matthews L."/>
            <person name="McLaren S."/>
            <person name="Sealy I."/>
            <person name="Caccamo M."/>
            <person name="Churcher C."/>
            <person name="Scott C."/>
            <person name="Barrett J.C."/>
            <person name="Koch R."/>
            <person name="Rauch G.J."/>
            <person name="White S."/>
            <person name="Chow W."/>
            <person name="Kilian B."/>
            <person name="Quintais L.T."/>
            <person name="Guerra-Assuncao J.A."/>
            <person name="Zhou Y."/>
            <person name="Gu Y."/>
            <person name="Yen J."/>
            <person name="Vogel J.H."/>
            <person name="Eyre T."/>
            <person name="Redmond S."/>
            <person name="Banerjee R."/>
            <person name="Chi J."/>
            <person name="Fu B."/>
            <person name="Langley E."/>
            <person name="Maguire S.F."/>
            <person name="Laird G.K."/>
            <person name="Lloyd D."/>
            <person name="Kenyon E."/>
            <person name="Donaldson S."/>
            <person name="Sehra H."/>
            <person name="Almeida-King J."/>
            <person name="Loveland J."/>
            <person name="Trevanion S."/>
            <person name="Jones M."/>
            <person name="Quail M."/>
            <person name="Willey D."/>
            <person name="Hunt A."/>
            <person name="Burton J."/>
            <person name="Sims S."/>
            <person name="McLay K."/>
            <person name="Plumb B."/>
            <person name="Davis J."/>
            <person name="Clee C."/>
            <person name="Oliver K."/>
            <person name="Clark R."/>
            <person name="Riddle C."/>
            <person name="Elliot D."/>
            <person name="Threadgold G."/>
            <person name="Harden G."/>
            <person name="Ware D."/>
            <person name="Begum S."/>
            <person name="Mortimore B."/>
            <person name="Kerry G."/>
            <person name="Heath P."/>
            <person name="Phillimore B."/>
            <person name="Tracey A."/>
            <person name="Corby N."/>
            <person name="Dunn M."/>
            <person name="Johnson C."/>
            <person name="Wood J."/>
            <person name="Clark S."/>
            <person name="Pelan S."/>
            <person name="Griffiths G."/>
            <person name="Smith M."/>
            <person name="Glithero R."/>
            <person name="Howden P."/>
            <person name="Barker N."/>
            <person name="Lloyd C."/>
            <person name="Stevens C."/>
            <person name="Harley J."/>
            <person name="Holt K."/>
            <person name="Panagiotidis G."/>
            <person name="Lovell J."/>
            <person name="Beasley H."/>
            <person name="Henderson C."/>
            <person name="Gordon D."/>
            <person name="Auger K."/>
            <person name="Wright D."/>
            <person name="Collins J."/>
            <person name="Raisen C."/>
            <person name="Dyer L."/>
            <person name="Leung K."/>
            <person name="Robertson L."/>
            <person name="Ambridge K."/>
            <person name="Leongamornlert D."/>
            <person name="McGuire S."/>
            <person name="Gilderthorp R."/>
            <person name="Griffiths C."/>
            <person name="Manthravadi D."/>
            <person name="Nichol S."/>
            <person name="Barker G."/>
            <person name="Whitehead S."/>
            <person name="Kay M."/>
            <person name="Brown J."/>
            <person name="Murnane C."/>
            <person name="Gray E."/>
            <person name="Humphries M."/>
            <person name="Sycamore N."/>
            <person name="Barker D."/>
            <person name="Saunders D."/>
            <person name="Wallis J."/>
            <person name="Babbage A."/>
            <person name="Hammond S."/>
            <person name="Mashreghi-Mohammadi M."/>
            <person name="Barr L."/>
            <person name="Martin S."/>
            <person name="Wray P."/>
            <person name="Ellington A."/>
            <person name="Matthews N."/>
            <person name="Ellwood M."/>
            <person name="Woodmansey R."/>
            <person name="Clark G."/>
            <person name="Cooper J."/>
            <person name="Tromans A."/>
            <person name="Grafham D."/>
            <person name="Skuce C."/>
            <person name="Pandian R."/>
            <person name="Andrews R."/>
            <person name="Harrison E."/>
            <person name="Kimberley A."/>
            <person name="Garnett J."/>
            <person name="Fosker N."/>
            <person name="Hall R."/>
            <person name="Garner P."/>
            <person name="Kelly D."/>
            <person name="Bird C."/>
            <person name="Palmer S."/>
            <person name="Gehring I."/>
            <person name="Berger A."/>
            <person name="Dooley C.M."/>
            <person name="Ersan-Urun Z."/>
            <person name="Eser C."/>
            <person name="Geiger H."/>
            <person name="Geisler M."/>
            <person name="Karotki L."/>
            <person name="Kirn A."/>
            <person name="Konantz J."/>
            <person name="Konantz M."/>
            <person name="Oberlander M."/>
            <person name="Rudolph-Geiger S."/>
            <person name="Teucke M."/>
            <person name="Lanz C."/>
            <person name="Raddatz G."/>
            <person name="Osoegawa K."/>
            <person name="Zhu B."/>
            <person name="Rapp A."/>
            <person name="Widaa S."/>
            <person name="Langford C."/>
            <person name="Yang F."/>
            <person name="Schuster S.C."/>
            <person name="Carter N.P."/>
            <person name="Harrow J."/>
            <person name="Ning Z."/>
            <person name="Herrero J."/>
            <person name="Searle S.M."/>
            <person name="Enright A."/>
            <person name="Geisler R."/>
            <person name="Plasterk R.H."/>
            <person name="Lee C."/>
            <person name="Westerfield M."/>
            <person name="de Jong P.J."/>
            <person name="Zon L.I."/>
            <person name="Postlethwait J.H."/>
            <person name="Nusslein-Volhard C."/>
            <person name="Hubbard T.J."/>
            <person name="Roest Crollius H."/>
            <person name="Rogers J."/>
            <person name="Stemple D.L."/>
        </authorList>
    </citation>
    <scope>NUCLEOTIDE SEQUENCE [LARGE SCALE GENOMIC DNA]</scope>
    <source>
        <strain>Tuebingen</strain>
    </source>
</reference>
<reference key="3">
    <citation type="submission" date="2005-07" db="EMBL/GenBank/DDBJ databases">
        <authorList>
            <consortium name="NIH - Zebrafish Gene Collection (ZGC) project"/>
        </authorList>
    </citation>
    <scope>NUCLEOTIDE SEQUENCE [LARGE SCALE MRNA]</scope>
</reference>
<reference key="4">
    <citation type="journal article" date="2005" name="Dev. Biol.">
        <title>Role of Yes kinase during early zebrafish development.</title>
        <authorList>
            <person name="Tsai W.B."/>
            <person name="Zhang X."/>
            <person name="Sharma D."/>
            <person name="Wu W."/>
            <person name="Kinsey W.H."/>
        </authorList>
    </citation>
    <scope>NUCLEOTIDE SEQUENCE [MRNA] OF 13-135</scope>
    <scope>FUNCTION</scope>
    <scope>SUBCELLULAR LOCATION</scope>
    <scope>DEVELOPMENTAL STAGE</scope>
    <scope>AUTOPHOSPHORYLATION</scope>
</reference>
<evidence type="ECO:0000250" key="1"/>
<evidence type="ECO:0000250" key="2">
    <source>
        <dbReference type="UniProtKB" id="P07947"/>
    </source>
</evidence>
<evidence type="ECO:0000250" key="3">
    <source>
        <dbReference type="UniProtKB" id="Q28923"/>
    </source>
</evidence>
<evidence type="ECO:0000255" key="4">
    <source>
        <dbReference type="PROSITE-ProRule" id="PRU00159"/>
    </source>
</evidence>
<evidence type="ECO:0000255" key="5">
    <source>
        <dbReference type="PROSITE-ProRule" id="PRU00191"/>
    </source>
</evidence>
<evidence type="ECO:0000255" key="6">
    <source>
        <dbReference type="PROSITE-ProRule" id="PRU00192"/>
    </source>
</evidence>
<evidence type="ECO:0000255" key="7">
    <source>
        <dbReference type="PROSITE-ProRule" id="PRU10028"/>
    </source>
</evidence>
<evidence type="ECO:0000256" key="8">
    <source>
        <dbReference type="SAM" id="MobiDB-lite"/>
    </source>
</evidence>
<evidence type="ECO:0000269" key="9">
    <source>
    </source>
</evidence>
<evidence type="ECO:0000269" key="10">
    <source>
    </source>
</evidence>
<evidence type="ECO:0000305" key="11"/>
<sequence>MGCVKSKEDKGPTQKYRPDPTNPTPGSHMGLYGPDPTQMGQSPALKGPTNNYNSRSSGLTPFGGSSSVITPFGGASSSFSTVAVNNPFPGVVTGGVTFFVALYDYEARTSDDLSFSKGDRFQIINNTEGDWWEARSINTGQKGYIPSNYVAPADSIQAEEWYFGKMGRKDAERLLLLPGNQRGTFLVRESETTKGAYSLSIRDWDEMKGDNVKHYKIRKLDSGGYYITTRAQFDTLQKLVKHYTEHADGLCYRLTTVCPTVKPQTQGLAKDAWEIPRESLRLELKLGQGCFGEVWMGTWNGTTKVAIKTLKPGTMSPEAFLQEAQIMKKLRHDKLVPLYAVVSEEPIYIVTEYMGKGSLLDFLKEGEGKYLKLPQLVDMAAQIADGMAFIERMNYIHRDLRAANILVGDNLVCKIADFGLARLIEDNEYTARQGAKFPIKWTAPEAALYGRFTIKSDVWSFGILLTELVTKGRVPYPGMVNREVLEQVERGYRMPCPQGCPESLHEMMRLCWKKEPDERPTFEYIQSFLEDYFTATEPQYQPGDNL</sequence>
<protein>
    <recommendedName>
        <fullName>Tyrosine-protein kinase yes</fullName>
        <ecNumber>2.7.10.2</ecNumber>
    </recommendedName>
    <alternativeName>
        <fullName>p61-Yes</fullName>
    </alternativeName>
</protein>
<keyword id="KW-0067">ATP-binding</keyword>
<keyword id="KW-0965">Cell junction</keyword>
<keyword id="KW-1003">Cell membrane</keyword>
<keyword id="KW-0963">Cytoplasm</keyword>
<keyword id="KW-0206">Cytoskeleton</keyword>
<keyword id="KW-0217">Developmental protein</keyword>
<keyword id="KW-0418">Kinase</keyword>
<keyword id="KW-0449">Lipoprotein</keyword>
<keyword id="KW-0472">Membrane</keyword>
<keyword id="KW-0519">Myristate</keyword>
<keyword id="KW-0547">Nucleotide-binding</keyword>
<keyword id="KW-0564">Palmitate</keyword>
<keyword id="KW-0597">Phosphoprotein</keyword>
<keyword id="KW-1185">Reference proteome</keyword>
<keyword id="KW-0727">SH2 domain</keyword>
<keyword id="KW-0728">SH3 domain</keyword>
<keyword id="KW-0808">Transferase</keyword>
<keyword id="KW-0829">Tyrosine-protein kinase</keyword>
<name>YES_DANRE</name>
<dbReference type="EC" id="2.7.10.2"/>
<dbReference type="EMBL" id="AJ620749">
    <property type="protein sequence ID" value="CAF06180.1"/>
    <property type="molecule type" value="mRNA"/>
</dbReference>
<dbReference type="EMBL" id="BX927088">
    <property type="protein sequence ID" value="CAN88236.1"/>
    <property type="molecule type" value="Genomic_DNA"/>
</dbReference>
<dbReference type="EMBL" id="BC128657">
    <property type="protein sequence ID" value="AAI28658.1"/>
    <property type="molecule type" value="mRNA"/>
</dbReference>
<dbReference type="EMBL" id="AY157872">
    <property type="protein sequence ID" value="AAN73265.1"/>
    <property type="molecule type" value="mRNA"/>
</dbReference>
<dbReference type="RefSeq" id="NP_001013288.2">
    <property type="nucleotide sequence ID" value="NM_001013270.3"/>
</dbReference>
<dbReference type="SMR" id="A1A5H8"/>
<dbReference type="FunCoup" id="A1A5H8">
    <property type="interactions" value="451"/>
</dbReference>
<dbReference type="STRING" id="7955.ENSDARP00000009659"/>
<dbReference type="PaxDb" id="7955-ENSDARP00000009659"/>
<dbReference type="PeptideAtlas" id="A1A5H8"/>
<dbReference type="Ensembl" id="ENSDART00000027090">
    <property type="protein sequence ID" value="ENSDARP00000009659"/>
    <property type="gene ID" value="ENSDARG00000005941"/>
</dbReference>
<dbReference type="Ensembl" id="ENSDART00000178066">
    <property type="protein sequence ID" value="ENSDARP00000144472"/>
    <property type="gene ID" value="ENSDARG00000005941"/>
</dbReference>
<dbReference type="GeneID" id="407620"/>
<dbReference type="KEGG" id="dre:407620"/>
<dbReference type="AGR" id="ZFIN:ZDB-GENE-050126-1"/>
<dbReference type="CTD" id="7525"/>
<dbReference type="ZFIN" id="ZDB-GENE-050126-1">
    <property type="gene designation" value="yes1"/>
</dbReference>
<dbReference type="eggNOG" id="KOG0197">
    <property type="taxonomic scope" value="Eukaryota"/>
</dbReference>
<dbReference type="HOGENOM" id="CLU_000288_7_2_1"/>
<dbReference type="InParanoid" id="A1A5H8"/>
<dbReference type="OMA" id="PSHMGHY"/>
<dbReference type="OrthoDB" id="4062651at2759"/>
<dbReference type="PhylomeDB" id="A1A5H8"/>
<dbReference type="TreeFam" id="TF351634"/>
<dbReference type="BRENDA" id="2.7.10.2">
    <property type="organism ID" value="928"/>
</dbReference>
<dbReference type="Reactome" id="R-DRE-1227986">
    <property type="pathway name" value="Signaling by ERBB2"/>
</dbReference>
<dbReference type="Reactome" id="R-DRE-1433557">
    <property type="pathway name" value="Signaling by SCF-KIT"/>
</dbReference>
<dbReference type="Reactome" id="R-DRE-1433559">
    <property type="pathway name" value="Regulation of KIT signaling"/>
</dbReference>
<dbReference type="Reactome" id="R-DRE-3928663">
    <property type="pathway name" value="EPHA-mediated growth cone collapse"/>
</dbReference>
<dbReference type="Reactome" id="R-DRE-3928665">
    <property type="pathway name" value="EPH-ephrin mediated repulsion of cells"/>
</dbReference>
<dbReference type="Reactome" id="R-DRE-912631">
    <property type="pathway name" value="Regulation of signaling by CBL"/>
</dbReference>
<dbReference type="PRO" id="PR:A1A5H8"/>
<dbReference type="Proteomes" id="UP000000437">
    <property type="component" value="Chromosome 2"/>
</dbReference>
<dbReference type="Bgee" id="ENSDARG00000005941">
    <property type="expression patterns" value="Expressed in presomitic mesoderm and 24 other cell types or tissues"/>
</dbReference>
<dbReference type="ExpressionAtlas" id="A1A5H8">
    <property type="expression patterns" value="baseline and differential"/>
</dbReference>
<dbReference type="GO" id="GO:0070161">
    <property type="term" value="C:anchoring junction"/>
    <property type="evidence" value="ECO:0007669"/>
    <property type="project" value="UniProtKB-SubCell"/>
</dbReference>
<dbReference type="GO" id="GO:0005813">
    <property type="term" value="C:centrosome"/>
    <property type="evidence" value="ECO:0007669"/>
    <property type="project" value="UniProtKB-SubCell"/>
</dbReference>
<dbReference type="GO" id="GO:0005829">
    <property type="term" value="C:cytosol"/>
    <property type="evidence" value="ECO:0007669"/>
    <property type="project" value="UniProtKB-SubCell"/>
</dbReference>
<dbReference type="GO" id="GO:0005886">
    <property type="term" value="C:plasma membrane"/>
    <property type="evidence" value="ECO:0000318"/>
    <property type="project" value="GO_Central"/>
</dbReference>
<dbReference type="GO" id="GO:0005524">
    <property type="term" value="F:ATP binding"/>
    <property type="evidence" value="ECO:0007669"/>
    <property type="project" value="UniProtKB-KW"/>
</dbReference>
<dbReference type="GO" id="GO:0004715">
    <property type="term" value="F:non-membrane spanning protein tyrosine kinase activity"/>
    <property type="evidence" value="ECO:0000318"/>
    <property type="project" value="GO_Central"/>
</dbReference>
<dbReference type="GO" id="GO:0004713">
    <property type="term" value="F:protein tyrosine kinase activity"/>
    <property type="evidence" value="ECO:0000314"/>
    <property type="project" value="ZFIN"/>
</dbReference>
<dbReference type="GO" id="GO:0005102">
    <property type="term" value="F:signaling receptor binding"/>
    <property type="evidence" value="ECO:0000318"/>
    <property type="project" value="GO_Central"/>
</dbReference>
<dbReference type="GO" id="GO:0034334">
    <property type="term" value="P:adherens junction maintenance"/>
    <property type="evidence" value="ECO:0000316"/>
    <property type="project" value="ZFIN"/>
</dbReference>
<dbReference type="GO" id="GO:0030154">
    <property type="term" value="P:cell differentiation"/>
    <property type="evidence" value="ECO:0000318"/>
    <property type="project" value="GO_Central"/>
</dbReference>
<dbReference type="GO" id="GO:0007169">
    <property type="term" value="P:cell surface receptor protein tyrosine kinase signaling pathway"/>
    <property type="evidence" value="ECO:0000318"/>
    <property type="project" value="GO_Central"/>
</dbReference>
<dbReference type="GO" id="GO:0060027">
    <property type="term" value="P:convergent extension involved in gastrulation"/>
    <property type="evidence" value="ECO:0000316"/>
    <property type="project" value="ZFIN"/>
</dbReference>
<dbReference type="CDD" id="cd05069">
    <property type="entry name" value="PTKc_Yes"/>
    <property type="match status" value="1"/>
</dbReference>
<dbReference type="CDD" id="cd09933">
    <property type="entry name" value="SH2_Src_family"/>
    <property type="match status" value="1"/>
</dbReference>
<dbReference type="CDD" id="cd12007">
    <property type="entry name" value="SH3_Yes"/>
    <property type="match status" value="1"/>
</dbReference>
<dbReference type="FunFam" id="1.10.510.10:FF:000553">
    <property type="entry name" value="Tyrosine-protein kinase"/>
    <property type="match status" value="1"/>
</dbReference>
<dbReference type="FunFam" id="2.30.30.40:FF:000022">
    <property type="entry name" value="Tyrosine-protein kinase"/>
    <property type="match status" value="1"/>
</dbReference>
<dbReference type="FunFam" id="3.30.200.20:FF:000016">
    <property type="entry name" value="Tyrosine-protein kinase"/>
    <property type="match status" value="1"/>
</dbReference>
<dbReference type="FunFam" id="3.30.505.10:FF:000001">
    <property type="entry name" value="Tyrosine-protein kinase"/>
    <property type="match status" value="1"/>
</dbReference>
<dbReference type="Gene3D" id="3.30.200.20">
    <property type="entry name" value="Phosphorylase Kinase, domain 1"/>
    <property type="match status" value="1"/>
</dbReference>
<dbReference type="Gene3D" id="3.30.505.10">
    <property type="entry name" value="SH2 domain"/>
    <property type="match status" value="1"/>
</dbReference>
<dbReference type="Gene3D" id="2.30.30.40">
    <property type="entry name" value="SH3 Domains"/>
    <property type="match status" value="1"/>
</dbReference>
<dbReference type="Gene3D" id="1.10.510.10">
    <property type="entry name" value="Transferase(Phosphotransferase) domain 1"/>
    <property type="match status" value="1"/>
</dbReference>
<dbReference type="InterPro" id="IPR011009">
    <property type="entry name" value="Kinase-like_dom_sf"/>
</dbReference>
<dbReference type="InterPro" id="IPR050198">
    <property type="entry name" value="Non-receptor_tyrosine_kinases"/>
</dbReference>
<dbReference type="InterPro" id="IPR000719">
    <property type="entry name" value="Prot_kinase_dom"/>
</dbReference>
<dbReference type="InterPro" id="IPR017441">
    <property type="entry name" value="Protein_kinase_ATP_BS"/>
</dbReference>
<dbReference type="InterPro" id="IPR001245">
    <property type="entry name" value="Ser-Thr/Tyr_kinase_cat_dom"/>
</dbReference>
<dbReference type="InterPro" id="IPR000980">
    <property type="entry name" value="SH2"/>
</dbReference>
<dbReference type="InterPro" id="IPR036860">
    <property type="entry name" value="SH2_dom_sf"/>
</dbReference>
<dbReference type="InterPro" id="IPR036028">
    <property type="entry name" value="SH3-like_dom_sf"/>
</dbReference>
<dbReference type="InterPro" id="IPR001452">
    <property type="entry name" value="SH3_domain"/>
</dbReference>
<dbReference type="InterPro" id="IPR008266">
    <property type="entry name" value="Tyr_kinase_AS"/>
</dbReference>
<dbReference type="InterPro" id="IPR020635">
    <property type="entry name" value="Tyr_kinase_cat_dom"/>
</dbReference>
<dbReference type="InterPro" id="IPR035751">
    <property type="entry name" value="Yes_SH3"/>
</dbReference>
<dbReference type="PANTHER" id="PTHR24418">
    <property type="entry name" value="TYROSINE-PROTEIN KINASE"/>
    <property type="match status" value="1"/>
</dbReference>
<dbReference type="Pfam" id="PF07714">
    <property type="entry name" value="PK_Tyr_Ser-Thr"/>
    <property type="match status" value="1"/>
</dbReference>
<dbReference type="Pfam" id="PF00017">
    <property type="entry name" value="SH2"/>
    <property type="match status" value="1"/>
</dbReference>
<dbReference type="Pfam" id="PF00018">
    <property type="entry name" value="SH3_1"/>
    <property type="match status" value="1"/>
</dbReference>
<dbReference type="PRINTS" id="PR00401">
    <property type="entry name" value="SH2DOMAIN"/>
</dbReference>
<dbReference type="PRINTS" id="PR00452">
    <property type="entry name" value="SH3DOMAIN"/>
</dbReference>
<dbReference type="PRINTS" id="PR00109">
    <property type="entry name" value="TYRKINASE"/>
</dbReference>
<dbReference type="SMART" id="SM00252">
    <property type="entry name" value="SH2"/>
    <property type="match status" value="1"/>
</dbReference>
<dbReference type="SMART" id="SM00326">
    <property type="entry name" value="SH3"/>
    <property type="match status" value="1"/>
</dbReference>
<dbReference type="SMART" id="SM00219">
    <property type="entry name" value="TyrKc"/>
    <property type="match status" value="1"/>
</dbReference>
<dbReference type="SUPFAM" id="SSF56112">
    <property type="entry name" value="Protein kinase-like (PK-like)"/>
    <property type="match status" value="1"/>
</dbReference>
<dbReference type="SUPFAM" id="SSF55550">
    <property type="entry name" value="SH2 domain"/>
    <property type="match status" value="1"/>
</dbReference>
<dbReference type="SUPFAM" id="SSF50044">
    <property type="entry name" value="SH3-domain"/>
    <property type="match status" value="1"/>
</dbReference>
<dbReference type="PROSITE" id="PS00107">
    <property type="entry name" value="PROTEIN_KINASE_ATP"/>
    <property type="match status" value="1"/>
</dbReference>
<dbReference type="PROSITE" id="PS50011">
    <property type="entry name" value="PROTEIN_KINASE_DOM"/>
    <property type="match status" value="1"/>
</dbReference>
<dbReference type="PROSITE" id="PS00109">
    <property type="entry name" value="PROTEIN_KINASE_TYR"/>
    <property type="match status" value="1"/>
</dbReference>
<dbReference type="PROSITE" id="PS50001">
    <property type="entry name" value="SH2"/>
    <property type="match status" value="1"/>
</dbReference>
<dbReference type="PROSITE" id="PS50002">
    <property type="entry name" value="SH3"/>
    <property type="match status" value="1"/>
</dbReference>
<feature type="initiator methionine" description="Removed" evidence="1">
    <location>
        <position position="1"/>
    </location>
</feature>
<feature type="chain" id="PRO_0000418881" description="Tyrosine-protein kinase yes">
    <location>
        <begin position="2"/>
        <end position="546"/>
    </location>
</feature>
<feature type="domain" description="SH3" evidence="6">
    <location>
        <begin position="94"/>
        <end position="155"/>
    </location>
</feature>
<feature type="domain" description="SH2" evidence="5">
    <location>
        <begin position="161"/>
        <end position="258"/>
    </location>
</feature>
<feature type="domain" description="Protein kinase" evidence="4">
    <location>
        <begin position="280"/>
        <end position="533"/>
    </location>
</feature>
<feature type="region of interest" description="Disordered" evidence="8">
    <location>
        <begin position="1"/>
        <end position="58"/>
    </location>
</feature>
<feature type="compositionally biased region" description="Basic and acidic residues" evidence="8">
    <location>
        <begin position="1"/>
        <end position="18"/>
    </location>
</feature>
<feature type="compositionally biased region" description="Polar residues" evidence="8">
    <location>
        <begin position="48"/>
        <end position="58"/>
    </location>
</feature>
<feature type="active site" description="Proton acceptor" evidence="4 7">
    <location>
        <position position="399"/>
    </location>
</feature>
<feature type="binding site" evidence="4">
    <location>
        <begin position="286"/>
        <end position="294"/>
    </location>
    <ligand>
        <name>ATP</name>
        <dbReference type="ChEBI" id="CHEBI:30616"/>
    </ligand>
</feature>
<feature type="binding site" evidence="4">
    <location>
        <position position="308"/>
    </location>
    <ligand>
        <name>ATP</name>
        <dbReference type="ChEBI" id="CHEBI:30616"/>
    </ligand>
</feature>
<feature type="modified residue" description="Phosphotyrosine; by autocatalysis" evidence="2">
    <location>
        <position position="429"/>
    </location>
</feature>
<feature type="modified residue" description="Phosphotyrosine; by CSK" evidence="1">
    <location>
        <position position="540"/>
    </location>
</feature>
<feature type="lipid moiety-binding region" description="N-myristoyl glycine" evidence="1">
    <location>
        <position position="2"/>
    </location>
</feature>
<feature type="lipid moiety-binding region" description="S-palmitoyl cysteine; in membrane form" evidence="1">
    <location>
        <position position="3"/>
    </location>
</feature>
<feature type="sequence conflict" description="In Ref. 4; AAN73265." evidence="11" ref="4">
    <original>T</original>
    <variation>S</variation>
    <location>
        <position position="21"/>
    </location>
</feature>
<feature type="sequence conflict" description="In Ref. 4; AAN73265." evidence="11" ref="4">
    <original>S</original>
    <variation>P</variation>
    <location>
        <position position="56"/>
    </location>
</feature>
<feature type="sequence conflict" description="In Ref. 4; AAN73265." evidence="11" ref="4">
    <original>W</original>
    <variation>C</variation>
    <location>
        <position position="132"/>
    </location>
</feature>
<feature type="sequence conflict" description="In Ref. 1; CAF06180." evidence="11" ref="1">
    <original>KE</original>
    <variation>NG</variation>
    <location>
        <begin position="514"/>
        <end position="515"/>
    </location>
</feature>
<gene>
    <name type="primary">yes1</name>
    <name type="synonym">yes</name>
</gene>
<accession>A1A5H8</accession>
<accession>Q6EWH1</accession>
<accession>Q8AXW6</accession>
<comment type="function">
    <text evidence="1 9 10">Non-receptor protein tyrosine kinase that is involved in the regulation of cell growth and survival, apoptosis, cell-cell adhesion, cytoskeleton remodeling, differentiation, G2/M progression and cytokinesis (By similarity). Required for convergent extension cell movements during gastrulation, acting with fyna via rhoa. May be required for epiboly to occur, possibly through its effects in calcium signaling. During embryonic development, phosphorylates ptk2.1/fak.</text>
</comment>
<comment type="catalytic activity">
    <reaction evidence="7">
        <text>L-tyrosyl-[protein] + ATP = O-phospho-L-tyrosyl-[protein] + ADP + H(+)</text>
        <dbReference type="Rhea" id="RHEA:10596"/>
        <dbReference type="Rhea" id="RHEA-COMP:10136"/>
        <dbReference type="Rhea" id="RHEA-COMP:20101"/>
        <dbReference type="ChEBI" id="CHEBI:15378"/>
        <dbReference type="ChEBI" id="CHEBI:30616"/>
        <dbReference type="ChEBI" id="CHEBI:46858"/>
        <dbReference type="ChEBI" id="CHEBI:61978"/>
        <dbReference type="ChEBI" id="CHEBI:456216"/>
        <dbReference type="EC" id="2.7.10.2"/>
    </reaction>
</comment>
<comment type="subcellular location">
    <subcellularLocation>
        <location evidence="9">Cell membrane</location>
    </subcellularLocation>
    <subcellularLocation>
        <location evidence="1">Cytoplasm</location>
        <location evidence="1">Cytoskeleton</location>
        <location evidence="1">Microtubule organizing center</location>
        <location evidence="1">Centrosome</location>
    </subcellularLocation>
    <subcellularLocation>
        <location evidence="1">Cytoplasm</location>
        <location evidence="1">Cytosol</location>
    </subcellularLocation>
    <subcellularLocation>
        <location evidence="3">Cell junction</location>
    </subcellularLocation>
</comment>
<comment type="tissue specificity">
    <text evidence="10">Widely expressed.</text>
</comment>
<comment type="developmental stage">
    <text evidence="9">Expressed in unfertilized eggs (at protein level). Most highly enriched in the cortex of the newly fertilized egg. Becomes concentrated in the blastodisc by 30 minutes post-insemination and remains distributed among all regions of the embryo, excluding yolk. In the pharyngula stage (24 hours post-fertilization), observed all over the embryo, with highest levels in the eyes and central nervous system and somites (at protein level).</text>
</comment>
<comment type="PTM">
    <text evidence="2">Autophosphorylation at Tyr-429 maintains enzyme activity.</text>
</comment>
<comment type="PTM">
    <text evidence="1">Palmitoylation at Cys-3 promotes membrane localization.</text>
</comment>
<comment type="similarity">
    <text evidence="4">Belongs to the protein kinase superfamily. Tyr protein kinase family. SRC subfamily.</text>
</comment>
<proteinExistence type="evidence at protein level"/>